<keyword id="KW-0002">3D-structure</keyword>
<keyword id="KW-0027">Amidation</keyword>
<keyword id="KW-0208">D-amino acid</keyword>
<keyword id="KW-1015">Disulfide bond</keyword>
<keyword id="KW-0446">Lipid-binding</keyword>
<keyword id="KW-0528">Neurotoxin</keyword>
<keyword id="KW-0964">Secreted</keyword>
<keyword id="KW-0732">Signal</keyword>
<keyword id="KW-0800">Toxin</keyword>
<protein>
    <recommendedName>
        <fullName evidence="8 9">Contryphan-Vc2</fullName>
    </recommendedName>
    <alternativeName>
        <fullName evidence="9">[D-Trp3]-contryphan-Vc2</fullName>
    </alternativeName>
</protein>
<comment type="function">
    <text evidence="1 2 4 5">Its target is unknown, but this toxin may modulate voltage-activated calcium channels (Cav) or calcium-dependent potassium channels (KCa).</text>
</comment>
<comment type="subcellular location">
    <subcellularLocation>
        <location evidence="11">Secreted</location>
    </subcellularLocation>
</comment>
<comment type="tissue specificity">
    <text evidence="11">Expressed by the venom duct.</text>
</comment>
<comment type="domain">
    <text evidence="10">The cysteine framework is C-C.</text>
</comment>
<comment type="PTM">
    <text evidence="7">D-chirality of Trp-58 ('Trp-3' in the mature Contryphan-Vc2 peptide) seems to be only protective against proteolytic degradation, since [L-Trp3]-contryphan-Vc2 is degraded by trypsin within 4 hours, while [D-Trp3]-contryphan-Vc2 is not affected and the toxicity of both [D-Trp3]- and [L-Trp3]-contryphan-Vc2 is similar when intractranially injected into mice (PubMed:28216409). It is also noteworthy that neither [D-Trp3]- nor [L-Trp3]-contryphan-Vc2 is susceptible to cleavage by pepsin or alpha-chymotrypsin over the 4 hours duration of the assay (PubMed:28216409).</text>
</comment>
<comment type="miscellaneous">
    <text evidence="7">Exists in two forms, due to cis-trans isomerization at 59-Thr-Pro-60. The trans conformation is the major form, with a cis:trans ratio of 1:5.</text>
</comment>
<comment type="similarity">
    <text evidence="10">Belongs to the O2 superfamily. Contryphan family.</text>
</comment>
<comment type="online information" name="Biological Magnetic Resonance Data Bank">
    <link uri="https://bmrb.io/data_library/summary/index.php?bmrbId=30152"/>
</comment>
<accession>W4VSA0</accession>
<accession>A0A1U7Q1X1</accession>
<organism>
    <name type="scientific">Conus victoriae</name>
    <name type="common">Queen Victoria cone</name>
    <dbReference type="NCBI Taxonomy" id="319920"/>
    <lineage>
        <taxon>Eukaryota</taxon>
        <taxon>Metazoa</taxon>
        <taxon>Spiralia</taxon>
        <taxon>Lophotrochozoa</taxon>
        <taxon>Mollusca</taxon>
        <taxon>Gastropoda</taxon>
        <taxon>Caenogastropoda</taxon>
        <taxon>Neogastropoda</taxon>
        <taxon>Conoidea</taxon>
        <taxon>Conidae</taxon>
        <taxon>Conus</taxon>
        <taxon>Cylinder</taxon>
    </lineage>
</organism>
<proteinExistence type="evidence at protein level"/>
<dbReference type="EMBL" id="GAIH01000060">
    <property type="protein sequence ID" value="JAB84657.1"/>
    <property type="molecule type" value="mRNA"/>
</dbReference>
<dbReference type="PDB" id="5L34">
    <property type="method" value="NMR"/>
    <property type="chains" value="A=56-62"/>
</dbReference>
<dbReference type="PDBsum" id="5L34"/>
<dbReference type="SMR" id="W4VSA0"/>
<dbReference type="GO" id="GO:0005576">
    <property type="term" value="C:extracellular region"/>
    <property type="evidence" value="ECO:0007669"/>
    <property type="project" value="UniProtKB-SubCell"/>
</dbReference>
<dbReference type="GO" id="GO:0008200">
    <property type="term" value="F:ion channel inhibitor activity"/>
    <property type="evidence" value="ECO:0007669"/>
    <property type="project" value="InterPro"/>
</dbReference>
<dbReference type="GO" id="GO:0008289">
    <property type="term" value="F:lipid binding"/>
    <property type="evidence" value="ECO:0007669"/>
    <property type="project" value="UniProtKB-KW"/>
</dbReference>
<dbReference type="GO" id="GO:0090729">
    <property type="term" value="F:toxin activity"/>
    <property type="evidence" value="ECO:0007669"/>
    <property type="project" value="UniProtKB-KW"/>
</dbReference>
<dbReference type="InterPro" id="IPR004214">
    <property type="entry name" value="Conotoxin"/>
</dbReference>
<dbReference type="Pfam" id="PF02950">
    <property type="entry name" value="Conotoxin"/>
    <property type="match status" value="1"/>
</dbReference>
<feature type="signal peptide" evidence="6">
    <location>
        <begin position="1"/>
        <end position="23"/>
    </location>
</feature>
<feature type="propeptide" id="PRO_0000445138" evidence="10">
    <location>
        <begin position="24"/>
        <end position="55"/>
    </location>
</feature>
<feature type="peptide" id="PRO_5004850815" description="Contryphan-Vc2" evidence="12">
    <location>
        <begin position="56"/>
        <end position="62"/>
    </location>
</feature>
<feature type="site" description="Key residue for activity; D- or L-amino acid at this position is not important" evidence="7">
    <location>
        <position position="58"/>
    </location>
</feature>
<feature type="modified residue" description="D-tryptophan" evidence="3">
    <location>
        <position position="58"/>
    </location>
</feature>
<feature type="modified residue" description="Cysteine amide" evidence="12">
    <location>
        <position position="62"/>
    </location>
</feature>
<feature type="disulfide bond" evidence="7 13">
    <location>
        <begin position="56"/>
        <end position="62"/>
    </location>
</feature>
<feature type="mutagenesis site" description="Loss of activity when intracranially injected into mice." evidence="7">
    <original>W</original>
    <variation>A</variation>
    <location>
        <position position="58"/>
    </location>
</feature>
<reference key="1">
    <citation type="journal article" date="2014" name="PLoS ONE">
        <title>Diversity of conotoxin gene superfamilies in the venomous snail, Conus victoriae.</title>
        <authorList>
            <person name="Robinson S.D."/>
            <person name="Safavi-Hemami H."/>
            <person name="McIntosh L.D."/>
            <person name="Purcell A.W."/>
            <person name="Norton R.S."/>
            <person name="Papenfuss A.T."/>
        </authorList>
    </citation>
    <scope>NUCLEOTIDE SEQUENCE [MRNA]</scope>
    <source>
        <tissue>Venom gland</tissue>
    </source>
</reference>
<reference key="2">
    <citation type="journal article" date="2017" name="Toxicon">
        <title>Structure and activity of contryphan-Vc2: importance of the D-amino acid residue.</title>
        <authorList>
            <person name="Drane S.B."/>
            <person name="Robinson S.D."/>
            <person name="MacRaild C.A."/>
            <person name="Chhabra S."/>
            <person name="Chittoor B."/>
            <person name="Morales R.A."/>
            <person name="Leung E.W."/>
            <person name="Belgi A."/>
            <person name="Espino S.S."/>
            <person name="Olivera B.M."/>
            <person name="Robinson A.J."/>
            <person name="Chalmers D.K."/>
            <person name="Norton R.S."/>
        </authorList>
    </citation>
    <scope>STRUCTURE BY NMR OF 56-63 ([D-TRP3]-CONTRYPHAN-VC2)</scope>
    <scope>SYNTHESIS OF 56-63 (D-TRP; L-TRP AND L-ALA)</scope>
    <scope>MUTAGENESIS OF TRP-58</scope>
    <scope>DISULFIDE BOND</scope>
    <scope>BIOASSAY</scope>
    <scope>FUNCTION</scope>
    <scope>AMIDATION AT CYS-62</scope>
    <scope>CIS-TRANS ISOMERIZATION</scope>
</reference>
<name>COW2_CONVC</name>
<evidence type="ECO:0000250" key="1">
    <source>
        <dbReference type="UniProtKB" id="P0C248"/>
    </source>
</evidence>
<evidence type="ECO:0000250" key="2">
    <source>
        <dbReference type="UniProtKB" id="P0C250"/>
    </source>
</evidence>
<evidence type="ECO:0000250" key="3">
    <source>
        <dbReference type="UniProtKB" id="P58786"/>
    </source>
</evidence>
<evidence type="ECO:0000250" key="4">
    <source>
        <dbReference type="UniProtKB" id="P62903"/>
    </source>
</evidence>
<evidence type="ECO:0000250" key="5">
    <source>
        <dbReference type="UniProtKB" id="P83047"/>
    </source>
</evidence>
<evidence type="ECO:0000255" key="6"/>
<evidence type="ECO:0000269" key="7">
    <source>
    </source>
</evidence>
<evidence type="ECO:0000303" key="8">
    <source>
    </source>
</evidence>
<evidence type="ECO:0000303" key="9">
    <source>
    </source>
</evidence>
<evidence type="ECO:0000305" key="10"/>
<evidence type="ECO:0000305" key="11">
    <source>
    </source>
</evidence>
<evidence type="ECO:0000305" key="12">
    <source>
    </source>
</evidence>
<evidence type="ECO:0000312" key="13">
    <source>
        <dbReference type="PDB" id="5L34"/>
    </source>
</evidence>
<sequence length="63" mass="6901">MGKLTILFLVAAALLSTQVMVQGDGDQPADRDAVPRDDNPAGTIEKFMNLLRQVRCRWTPVCG</sequence>